<name>ESR1_ARATH</name>
<proteinExistence type="evidence at protein level"/>
<comment type="function">
    <text evidence="1 4 5 6">Regulates gene expression patterns in meristems and thus modulates organ development. Required for correct embryo patterning and cotyledon organogenesis. Modulates auxin signaling pathway in early embryos. Involved in the cytokinin signaling pathway that promotes shoot regeneration. Acts as a transcriptional activator. Binds to the GCC-box pathogenesis-related promoter element. May be involved in the regulation of gene expression by stress factors and by components of stress signal transduction pathways (By similarity).</text>
</comment>
<comment type="subunit">
    <text evidence="6">Interacts with class 3 HD-ZIP proteins such as ATHB-8, CNA, PHB, PHV, and REV.</text>
</comment>
<comment type="interaction">
    <interactant intactId="EBI-1536756">
        <id>Q9SAD4</id>
    </interactant>
    <interactant intactId="EBI-1536772">
        <id>O04292</id>
        <label>ATHB-9</label>
    </interactant>
    <organismsDiffer>false</organismsDiffer>
    <experiments>5</experiments>
</comment>
<comment type="interaction">
    <interactant intactId="EBI-1536756">
        <id>Q9SAD4</id>
    </interactant>
    <interactant intactId="EBI-617095">
        <id>Q9LEZ3</id>
        <label>BIM1</label>
    </interactant>
    <organismsDiffer>false</organismsDiffer>
    <experiments>4</experiments>
</comment>
<comment type="interaction">
    <interactant intactId="EBI-1536756">
        <id>Q9SAD4</id>
    </interactant>
    <interactant intactId="EBI-2363244">
        <id>Q9FJ49</id>
        <label>PYL12</label>
    </interactant>
    <organismsDiffer>false</organismsDiffer>
    <experiments>3</experiments>
</comment>
<comment type="interaction">
    <interactant intactId="EBI-1536756">
        <id>Q9SAD4</id>
    </interactant>
    <interactant intactId="EBI-2363192">
        <id>Q8S8E3</id>
        <label>PYL6</label>
    </interactant>
    <organismsDiffer>false</organismsDiffer>
    <experiments>3</experiments>
</comment>
<comment type="interaction">
    <interactant intactId="EBI-1536756">
        <id>Q9SAD4</id>
    </interactant>
    <interactant intactId="EBI-2349513">
        <id>Q84MC7</id>
        <label>PYL9</label>
    </interactant>
    <organismsDiffer>false</organismsDiffer>
    <experiments>3</experiments>
</comment>
<comment type="subcellular location">
    <subcellularLocation>
        <location evidence="7">Nucleus</location>
    </subcellularLocation>
</comment>
<comment type="tissue specificity">
    <text evidence="4 5 6">Expressed in shoot apical and floral meristems, and in organ primordia. Transient expression during shoot regeneration.</text>
</comment>
<comment type="developmental stage">
    <text evidence="5 6">First observed in the embryo at four-cell stage. At the globular stage, localized in cotyledons primordia. Later confined to embryonic cotyledons tips. Expressed from embryogenesis onward in the central zone of the shoot apical and floral meristems, in organ anlagen, and (transiently) in the distal domains of organ primordia.</text>
</comment>
<comment type="induction">
    <text evidence="4">By cytokinins.</text>
</comment>
<comment type="miscellaneous">
    <text>'Dornroeschen' means 'Sleeping beauty' in German.</text>
</comment>
<comment type="similarity">
    <text evidence="7">Belongs to the AP2/ERF transcription factor family. ERF subfamily.</text>
</comment>
<accession>Q9SAD4</accession>
<accession>Q8W258</accession>
<feature type="chain" id="PRO_0000297927" description="Ethylene-responsive transcription factor ESR1">
    <location>
        <begin position="1"/>
        <end position="328"/>
    </location>
</feature>
<feature type="DNA-binding region" description="AP2/ERF" evidence="2">
    <location>
        <begin position="56"/>
        <end position="113"/>
    </location>
</feature>
<feature type="region of interest" description="Disordered" evidence="3">
    <location>
        <begin position="1"/>
        <end position="55"/>
    </location>
</feature>
<feature type="compositionally biased region" description="Polar residues" evidence="3">
    <location>
        <begin position="41"/>
        <end position="55"/>
    </location>
</feature>
<feature type="sequence conflict" description="In Ref. 1; AAL56226." evidence="7" ref="1">
    <original>N</original>
    <variation>A</variation>
    <location>
        <position position="259"/>
    </location>
</feature>
<protein>
    <recommendedName>
        <fullName>Ethylene-responsive transcription factor ESR1</fullName>
    </recommendedName>
    <alternativeName>
        <fullName>Protein DORNROSCHEN</fullName>
    </alternativeName>
    <alternativeName>
        <fullName>Protein ENHANCER OF SHOOT REGENERATION 1</fullName>
    </alternativeName>
</protein>
<sequence>MEKALRNFTESTHSPDPNPLTKFFTEPTASPVSRNRKLSSKDTTVTIAGAGSSTTRYRGVRRRPWGRYAAEIRDPMSKERRWLGTFDTAEQAACAYDSAARAFRGAKARTNFTYPTAVIMPEPRFSFSNKKSSPSARCPLPSLPLDSSTQNFYGAPAAQRIYNTQSIFLRDASCSSRKTTPYNNSFNGSSSSYSASKTACVSYSENENNESFFPEESSDTGLLQEVVQEFLKKNRGVPPSPPTPPPVTSHHDNSGYFSNLTIYSENMVQETKETLSSKLDRYGNFQANDDGVRAVADGGLSLGSNEWGYQEMLMYGTQLGCTCRRSWG</sequence>
<reference key="1">
    <citation type="journal article" date="2001" name="Plant Cell">
        <title>Overexpression of Arabidopsis ESR1 induces initiation of shoot regeneration.</title>
        <authorList>
            <person name="Banno H."/>
            <person name="Ikeda Y."/>
            <person name="Niu Q.-W."/>
            <person name="Chua N.-H."/>
        </authorList>
    </citation>
    <scope>NUCLEOTIDE SEQUENCE [MRNA]</scope>
    <scope>FUNCTION</scope>
    <scope>TISSUE SPECIFICITY</scope>
    <scope>INDUCTION BY CYTOKININS</scope>
    <source>
        <strain>cv. Wassilewskija</strain>
    </source>
</reference>
<reference key="2">
    <citation type="journal article" date="2000" name="Nature">
        <title>Sequence and analysis of chromosome 1 of the plant Arabidopsis thaliana.</title>
        <authorList>
            <person name="Theologis A."/>
            <person name="Ecker J.R."/>
            <person name="Palm C.J."/>
            <person name="Federspiel N.A."/>
            <person name="Kaul S."/>
            <person name="White O."/>
            <person name="Alonso J."/>
            <person name="Altafi H."/>
            <person name="Araujo R."/>
            <person name="Bowman C.L."/>
            <person name="Brooks S.Y."/>
            <person name="Buehler E."/>
            <person name="Chan A."/>
            <person name="Chao Q."/>
            <person name="Chen H."/>
            <person name="Cheuk R.F."/>
            <person name="Chin C.W."/>
            <person name="Chung M.K."/>
            <person name="Conn L."/>
            <person name="Conway A.B."/>
            <person name="Conway A.R."/>
            <person name="Creasy T.H."/>
            <person name="Dewar K."/>
            <person name="Dunn P."/>
            <person name="Etgu P."/>
            <person name="Feldblyum T.V."/>
            <person name="Feng J.-D."/>
            <person name="Fong B."/>
            <person name="Fujii C.Y."/>
            <person name="Gill J.E."/>
            <person name="Goldsmith A.D."/>
            <person name="Haas B."/>
            <person name="Hansen N.F."/>
            <person name="Hughes B."/>
            <person name="Huizar L."/>
            <person name="Hunter J.L."/>
            <person name="Jenkins J."/>
            <person name="Johnson-Hopson C."/>
            <person name="Khan S."/>
            <person name="Khaykin E."/>
            <person name="Kim C.J."/>
            <person name="Koo H.L."/>
            <person name="Kremenetskaia I."/>
            <person name="Kurtz D.B."/>
            <person name="Kwan A."/>
            <person name="Lam B."/>
            <person name="Langin-Hooper S."/>
            <person name="Lee A."/>
            <person name="Lee J.M."/>
            <person name="Lenz C.A."/>
            <person name="Li J.H."/>
            <person name="Li Y.-P."/>
            <person name="Lin X."/>
            <person name="Liu S.X."/>
            <person name="Liu Z.A."/>
            <person name="Luros J.S."/>
            <person name="Maiti R."/>
            <person name="Marziali A."/>
            <person name="Militscher J."/>
            <person name="Miranda M."/>
            <person name="Nguyen M."/>
            <person name="Nierman W.C."/>
            <person name="Osborne B.I."/>
            <person name="Pai G."/>
            <person name="Peterson J."/>
            <person name="Pham P.K."/>
            <person name="Rizzo M."/>
            <person name="Rooney T."/>
            <person name="Rowley D."/>
            <person name="Sakano H."/>
            <person name="Salzberg S.L."/>
            <person name="Schwartz J.R."/>
            <person name="Shinn P."/>
            <person name="Southwick A.M."/>
            <person name="Sun H."/>
            <person name="Tallon L.J."/>
            <person name="Tambunga G."/>
            <person name="Toriumi M.J."/>
            <person name="Town C.D."/>
            <person name="Utterback T."/>
            <person name="Van Aken S."/>
            <person name="Vaysberg M."/>
            <person name="Vysotskaia V.S."/>
            <person name="Walker M."/>
            <person name="Wu D."/>
            <person name="Yu G."/>
            <person name="Fraser C.M."/>
            <person name="Venter J.C."/>
            <person name="Davis R.W."/>
        </authorList>
    </citation>
    <scope>NUCLEOTIDE SEQUENCE [LARGE SCALE GENOMIC DNA]</scope>
    <source>
        <strain>cv. Columbia</strain>
    </source>
</reference>
<reference key="3">
    <citation type="journal article" date="2017" name="Plant J.">
        <title>Araport11: a complete reannotation of the Arabidopsis thaliana reference genome.</title>
        <authorList>
            <person name="Cheng C.Y."/>
            <person name="Krishnakumar V."/>
            <person name="Chan A.P."/>
            <person name="Thibaud-Nissen F."/>
            <person name="Schobel S."/>
            <person name="Town C.D."/>
        </authorList>
    </citation>
    <scope>GENOME REANNOTATION</scope>
    <source>
        <strain>cv. Columbia</strain>
    </source>
</reference>
<reference key="4">
    <citation type="journal article" date="2003" name="Plant Cell">
        <title>The DORNROSCHEN/ENHANCER OF SHOOT REGENERATION1 gene of Arabidopsis acts in the control of meristem cell fate and lateral organ development.</title>
        <authorList>
            <person name="Kirch T."/>
            <person name="Simon R."/>
            <person name="Gruenewald M."/>
            <person name="Werr W."/>
        </authorList>
    </citation>
    <scope>FUNCTION</scope>
    <scope>DEVELOPMENTAL STAGE</scope>
    <scope>TISSUE SPECIFICITY</scope>
</reference>
<reference key="5">
    <citation type="journal article" date="2006" name="Plant Physiol.">
        <title>Genome-wide analysis of the ERF gene family in Arabidopsis and rice.</title>
        <authorList>
            <person name="Nakano T."/>
            <person name="Suzuki K."/>
            <person name="Fujimura T."/>
            <person name="Shinshi H."/>
        </authorList>
    </citation>
    <scope>GENE FAMILY</scope>
    <scope>NOMENCLATURE</scope>
</reference>
<reference key="6">
    <citation type="journal article" date="2007" name="Development">
        <title>The AP2 transcription factors DORNROSCHEN and DORNROSCHEN-LIKE redundantly control Arabidopsis embryo patterning via interaction with PHAVOLUTA.</title>
        <authorList>
            <person name="Chandler J.W."/>
            <person name="Cole M."/>
            <person name="Flier A."/>
            <person name="Grewe B."/>
            <person name="Werr W."/>
        </authorList>
    </citation>
    <scope>FUNCTION</scope>
    <scope>TISSUE SPECIFICITY</scope>
    <scope>INTERACTION WITH ATHB-8; CNA; PHB; PHV AND REV</scope>
    <scope>DEVELOPMENTAL STAGE</scope>
</reference>
<keyword id="KW-0010">Activator</keyword>
<keyword id="KW-0927">Auxin signaling pathway</keyword>
<keyword id="KW-0932">Cytokinin signaling pathway</keyword>
<keyword id="KW-0238">DNA-binding</keyword>
<keyword id="KW-0936">Ethylene signaling pathway</keyword>
<keyword id="KW-0539">Nucleus</keyword>
<keyword id="KW-1185">Reference proteome</keyword>
<keyword id="KW-0804">Transcription</keyword>
<keyword id="KW-0805">Transcription regulation</keyword>
<organism>
    <name type="scientific">Arabidopsis thaliana</name>
    <name type="common">Mouse-ear cress</name>
    <dbReference type="NCBI Taxonomy" id="3702"/>
    <lineage>
        <taxon>Eukaryota</taxon>
        <taxon>Viridiplantae</taxon>
        <taxon>Streptophyta</taxon>
        <taxon>Embryophyta</taxon>
        <taxon>Tracheophyta</taxon>
        <taxon>Spermatophyta</taxon>
        <taxon>Magnoliopsida</taxon>
        <taxon>eudicotyledons</taxon>
        <taxon>Gunneridae</taxon>
        <taxon>Pentapetalae</taxon>
        <taxon>rosids</taxon>
        <taxon>malvids</taxon>
        <taxon>Brassicales</taxon>
        <taxon>Brassicaceae</taxon>
        <taxon>Camelineae</taxon>
        <taxon>Arabidopsis</taxon>
    </lineage>
</organism>
<gene>
    <name type="primary">ESR1</name>
    <name type="synonym">DRN</name>
    <name type="synonym">ERF089</name>
    <name type="ordered locus">At1g12980</name>
    <name type="ORF">F3F19.1</name>
</gene>
<evidence type="ECO:0000250" key="1"/>
<evidence type="ECO:0000255" key="2">
    <source>
        <dbReference type="PROSITE-ProRule" id="PRU00366"/>
    </source>
</evidence>
<evidence type="ECO:0000256" key="3">
    <source>
        <dbReference type="SAM" id="MobiDB-lite"/>
    </source>
</evidence>
<evidence type="ECO:0000269" key="4">
    <source>
    </source>
</evidence>
<evidence type="ECO:0000269" key="5">
    <source>
    </source>
</evidence>
<evidence type="ECO:0000269" key="6">
    <source>
    </source>
</evidence>
<evidence type="ECO:0000305" key="7"/>
<dbReference type="EMBL" id="AF353577">
    <property type="protein sequence ID" value="AAL56226.1"/>
    <property type="molecule type" value="mRNA"/>
</dbReference>
<dbReference type="EMBL" id="AC007357">
    <property type="protein sequence ID" value="AAD31052.1"/>
    <property type="molecule type" value="Genomic_DNA"/>
</dbReference>
<dbReference type="EMBL" id="CP002684">
    <property type="protein sequence ID" value="AEE28956.1"/>
    <property type="molecule type" value="Genomic_DNA"/>
</dbReference>
<dbReference type="PIR" id="G86263">
    <property type="entry name" value="G86263"/>
</dbReference>
<dbReference type="RefSeq" id="NP_172758.1">
    <property type="nucleotide sequence ID" value="NM_101169.3"/>
</dbReference>
<dbReference type="SMR" id="Q9SAD4"/>
<dbReference type="BioGRID" id="23096">
    <property type="interactions" value="7"/>
</dbReference>
<dbReference type="FunCoup" id="Q9SAD4">
    <property type="interactions" value="1"/>
</dbReference>
<dbReference type="IntAct" id="Q9SAD4">
    <property type="interactions" value="18"/>
</dbReference>
<dbReference type="STRING" id="3702.Q9SAD4"/>
<dbReference type="GlyGen" id="Q9SAD4">
    <property type="glycosylation" value="1 site"/>
</dbReference>
<dbReference type="PaxDb" id="3702-AT1G12980.1"/>
<dbReference type="EnsemblPlants" id="AT1G12980.1">
    <property type="protein sequence ID" value="AT1G12980.1"/>
    <property type="gene ID" value="AT1G12980"/>
</dbReference>
<dbReference type="GeneID" id="837856"/>
<dbReference type="Gramene" id="AT1G12980.1">
    <property type="protein sequence ID" value="AT1G12980.1"/>
    <property type="gene ID" value="AT1G12980"/>
</dbReference>
<dbReference type="KEGG" id="ath:AT1G12980"/>
<dbReference type="Araport" id="AT1G12980"/>
<dbReference type="TAIR" id="AT1G12980">
    <property type="gene designation" value="ESR1"/>
</dbReference>
<dbReference type="eggNOG" id="ENOG502RE27">
    <property type="taxonomic scope" value="Eukaryota"/>
</dbReference>
<dbReference type="HOGENOM" id="CLU_848224_0_0_1"/>
<dbReference type="InParanoid" id="Q9SAD4"/>
<dbReference type="OMA" id="MLMYGTQ"/>
<dbReference type="PRO" id="PR:Q9SAD4"/>
<dbReference type="Proteomes" id="UP000006548">
    <property type="component" value="Chromosome 1"/>
</dbReference>
<dbReference type="ExpressionAtlas" id="Q9SAD4">
    <property type="expression patterns" value="baseline and differential"/>
</dbReference>
<dbReference type="GO" id="GO:0005829">
    <property type="term" value="C:cytosol"/>
    <property type="evidence" value="ECO:0000314"/>
    <property type="project" value="TAIR"/>
</dbReference>
<dbReference type="GO" id="GO:0005634">
    <property type="term" value="C:nucleus"/>
    <property type="evidence" value="ECO:0000314"/>
    <property type="project" value="TAIR"/>
</dbReference>
<dbReference type="GO" id="GO:0003700">
    <property type="term" value="F:DNA-binding transcription factor activity"/>
    <property type="evidence" value="ECO:0000250"/>
    <property type="project" value="TAIR"/>
</dbReference>
<dbReference type="GO" id="GO:0000976">
    <property type="term" value="F:transcription cis-regulatory region binding"/>
    <property type="evidence" value="ECO:0000353"/>
    <property type="project" value="TAIR"/>
</dbReference>
<dbReference type="GO" id="GO:0009734">
    <property type="term" value="P:auxin-activated signaling pathway"/>
    <property type="evidence" value="ECO:0007669"/>
    <property type="project" value="UniProtKB-KW"/>
</dbReference>
<dbReference type="GO" id="GO:0048825">
    <property type="term" value="P:cotyledon development"/>
    <property type="evidence" value="ECO:0000315"/>
    <property type="project" value="TAIR"/>
</dbReference>
<dbReference type="GO" id="GO:0009736">
    <property type="term" value="P:cytokinin-activated signaling pathway"/>
    <property type="evidence" value="ECO:0007669"/>
    <property type="project" value="UniProtKB-KW"/>
</dbReference>
<dbReference type="GO" id="GO:0009880">
    <property type="term" value="P:embryonic pattern specification"/>
    <property type="evidence" value="ECO:0000315"/>
    <property type="project" value="TAIR"/>
</dbReference>
<dbReference type="GO" id="GO:0009873">
    <property type="term" value="P:ethylene-activated signaling pathway"/>
    <property type="evidence" value="ECO:0007669"/>
    <property type="project" value="UniProtKB-KW"/>
</dbReference>
<dbReference type="GO" id="GO:1905392">
    <property type="term" value="P:plant organ morphogenesis"/>
    <property type="evidence" value="ECO:0000315"/>
    <property type="project" value="TAIR"/>
</dbReference>
<dbReference type="GO" id="GO:0009735">
    <property type="term" value="P:response to cytokinin"/>
    <property type="evidence" value="ECO:0000270"/>
    <property type="project" value="TAIR"/>
</dbReference>
<dbReference type="GO" id="GO:0090708">
    <property type="term" value="P:specification of plant organ axis polarity"/>
    <property type="evidence" value="ECO:0000315"/>
    <property type="project" value="TAIR"/>
</dbReference>
<dbReference type="CDD" id="cd00018">
    <property type="entry name" value="AP2"/>
    <property type="match status" value="1"/>
</dbReference>
<dbReference type="FunFam" id="3.30.730.10:FF:000001">
    <property type="entry name" value="Ethylene-responsive transcription factor 2"/>
    <property type="match status" value="1"/>
</dbReference>
<dbReference type="Gene3D" id="3.30.730.10">
    <property type="entry name" value="AP2/ERF domain"/>
    <property type="match status" value="1"/>
</dbReference>
<dbReference type="InterPro" id="IPR001471">
    <property type="entry name" value="AP2/ERF_dom"/>
</dbReference>
<dbReference type="InterPro" id="IPR036955">
    <property type="entry name" value="AP2/ERF_dom_sf"/>
</dbReference>
<dbReference type="InterPro" id="IPR016177">
    <property type="entry name" value="DNA-bd_dom_sf"/>
</dbReference>
<dbReference type="PANTHER" id="PTHR31677">
    <property type="entry name" value="AP2 DOMAIN CLASS TRANSCRIPTION FACTOR"/>
    <property type="match status" value="1"/>
</dbReference>
<dbReference type="PANTHER" id="PTHR31677:SF245">
    <property type="entry name" value="ETHYLENE-RESPONSIVE TRANSCRIPTION FACTOR ESR1"/>
    <property type="match status" value="1"/>
</dbReference>
<dbReference type="Pfam" id="PF00847">
    <property type="entry name" value="AP2"/>
    <property type="match status" value="1"/>
</dbReference>
<dbReference type="PRINTS" id="PR00367">
    <property type="entry name" value="ETHRSPELEMNT"/>
</dbReference>
<dbReference type="SMART" id="SM00380">
    <property type="entry name" value="AP2"/>
    <property type="match status" value="1"/>
</dbReference>
<dbReference type="SUPFAM" id="SSF54171">
    <property type="entry name" value="DNA-binding domain"/>
    <property type="match status" value="1"/>
</dbReference>
<dbReference type="PROSITE" id="PS51032">
    <property type="entry name" value="AP2_ERF"/>
    <property type="match status" value="1"/>
</dbReference>